<sequence>MSVMQNNSEKSKWFLPGILGGLATTMKHLLKNLFNQKKMMTLNYPEEKYEYSPRFKGNHVLTVKKDGSLRCTACMLCATNCPAECIKITAAEHNDPTVEKFPISYEIDILRCVFCGFCEEACPVDAIRLGPEWQTPGVNGANFIYDINHLAYRPNLKGGILTHVDDEERHKAGI</sequence>
<comment type="function">
    <text evidence="1">NDH-1 shuttles electrons from NADH, via FMN and iron-sulfur (Fe-S) centers, to quinones in the respiratory chain. The immediate electron acceptor for the enzyme in this species is believed to be ubiquinone. Couples the redox reaction to proton translocation (for every two electrons transferred, four hydrogen ions are translocated across the cytoplasmic membrane), and thus conserves the redox energy in a proton gradient.</text>
</comment>
<comment type="catalytic activity">
    <reaction evidence="1">
        <text>a quinone + NADH + 5 H(+)(in) = a quinol + NAD(+) + 4 H(+)(out)</text>
        <dbReference type="Rhea" id="RHEA:57888"/>
        <dbReference type="ChEBI" id="CHEBI:15378"/>
        <dbReference type="ChEBI" id="CHEBI:24646"/>
        <dbReference type="ChEBI" id="CHEBI:57540"/>
        <dbReference type="ChEBI" id="CHEBI:57945"/>
        <dbReference type="ChEBI" id="CHEBI:132124"/>
    </reaction>
</comment>
<comment type="cofactor">
    <cofactor evidence="1">
        <name>[4Fe-4S] cluster</name>
        <dbReference type="ChEBI" id="CHEBI:49883"/>
    </cofactor>
    <text evidence="1">Binds 2 [4Fe-4S] clusters per subunit.</text>
</comment>
<comment type="subunit">
    <text evidence="1">NDH-1 is composed of 14 different subunits. Subunits NuoA, H, J, K, L, M, N constitute the membrane sector of the complex.</text>
</comment>
<comment type="subcellular location">
    <subcellularLocation>
        <location evidence="1">Cell inner membrane</location>
        <topology evidence="1">Peripheral membrane protein</topology>
    </subcellularLocation>
</comment>
<comment type="similarity">
    <text evidence="1">Belongs to the complex I 23 kDa subunit family.</text>
</comment>
<proteinExistence type="inferred from homology"/>
<accession>Q6MIR9</accession>
<evidence type="ECO:0000255" key="1">
    <source>
        <dbReference type="HAMAP-Rule" id="MF_01351"/>
    </source>
</evidence>
<gene>
    <name evidence="1" type="primary">nuoI</name>
    <name type="ordered locus">Bd3080</name>
</gene>
<feature type="chain" id="PRO_0000245699" description="NADH-quinone oxidoreductase subunit I">
    <location>
        <begin position="1"/>
        <end position="174"/>
    </location>
</feature>
<feature type="domain" description="4Fe-4S ferredoxin-type 1" evidence="1">
    <location>
        <begin position="61"/>
        <end position="91"/>
    </location>
</feature>
<feature type="domain" description="4Fe-4S ferredoxin-type 2" evidence="1">
    <location>
        <begin position="103"/>
        <end position="132"/>
    </location>
</feature>
<feature type="binding site" evidence="1">
    <location>
        <position position="71"/>
    </location>
    <ligand>
        <name>[4Fe-4S] cluster</name>
        <dbReference type="ChEBI" id="CHEBI:49883"/>
        <label>1</label>
    </ligand>
</feature>
<feature type="binding site" evidence="1">
    <location>
        <position position="74"/>
    </location>
    <ligand>
        <name>[4Fe-4S] cluster</name>
        <dbReference type="ChEBI" id="CHEBI:49883"/>
        <label>1</label>
    </ligand>
</feature>
<feature type="binding site" evidence="1">
    <location>
        <position position="77"/>
    </location>
    <ligand>
        <name>[4Fe-4S] cluster</name>
        <dbReference type="ChEBI" id="CHEBI:49883"/>
        <label>1</label>
    </ligand>
</feature>
<feature type="binding site" evidence="1">
    <location>
        <position position="81"/>
    </location>
    <ligand>
        <name>[4Fe-4S] cluster</name>
        <dbReference type="ChEBI" id="CHEBI:49883"/>
        <label>2</label>
    </ligand>
</feature>
<feature type="binding site" evidence="1">
    <location>
        <position position="112"/>
    </location>
    <ligand>
        <name>[4Fe-4S] cluster</name>
        <dbReference type="ChEBI" id="CHEBI:49883"/>
        <label>2</label>
    </ligand>
</feature>
<feature type="binding site" evidence="1">
    <location>
        <position position="115"/>
    </location>
    <ligand>
        <name>[4Fe-4S] cluster</name>
        <dbReference type="ChEBI" id="CHEBI:49883"/>
        <label>2</label>
    </ligand>
</feature>
<feature type="binding site" evidence="1">
    <location>
        <position position="118"/>
    </location>
    <ligand>
        <name>[4Fe-4S] cluster</name>
        <dbReference type="ChEBI" id="CHEBI:49883"/>
        <label>2</label>
    </ligand>
</feature>
<feature type="binding site" evidence="1">
    <location>
        <position position="122"/>
    </location>
    <ligand>
        <name>[4Fe-4S] cluster</name>
        <dbReference type="ChEBI" id="CHEBI:49883"/>
        <label>1</label>
    </ligand>
</feature>
<keyword id="KW-0004">4Fe-4S</keyword>
<keyword id="KW-0997">Cell inner membrane</keyword>
<keyword id="KW-1003">Cell membrane</keyword>
<keyword id="KW-0408">Iron</keyword>
<keyword id="KW-0411">Iron-sulfur</keyword>
<keyword id="KW-0472">Membrane</keyword>
<keyword id="KW-0479">Metal-binding</keyword>
<keyword id="KW-0520">NAD</keyword>
<keyword id="KW-0874">Quinone</keyword>
<keyword id="KW-1185">Reference proteome</keyword>
<keyword id="KW-0677">Repeat</keyword>
<keyword id="KW-1278">Translocase</keyword>
<keyword id="KW-0830">Ubiquinone</keyword>
<organism>
    <name type="scientific">Bdellovibrio bacteriovorus (strain ATCC 15356 / DSM 50701 / NCIMB 9529 / HD100)</name>
    <dbReference type="NCBI Taxonomy" id="264462"/>
    <lineage>
        <taxon>Bacteria</taxon>
        <taxon>Pseudomonadati</taxon>
        <taxon>Bdellovibrionota</taxon>
        <taxon>Bdellovibrionia</taxon>
        <taxon>Bdellovibrionales</taxon>
        <taxon>Pseudobdellovibrionaceae</taxon>
        <taxon>Bdellovibrio</taxon>
    </lineage>
</organism>
<reference key="1">
    <citation type="journal article" date="2004" name="Science">
        <title>A predator unmasked: life cycle of Bdellovibrio bacteriovorus from a genomic perspective.</title>
        <authorList>
            <person name="Rendulic S."/>
            <person name="Jagtap P."/>
            <person name="Rosinus A."/>
            <person name="Eppinger M."/>
            <person name="Baar C."/>
            <person name="Lanz C."/>
            <person name="Keller H."/>
            <person name="Lambert C."/>
            <person name="Evans K.J."/>
            <person name="Goesmann A."/>
            <person name="Meyer F."/>
            <person name="Sockett R.E."/>
            <person name="Schuster S.C."/>
        </authorList>
    </citation>
    <scope>NUCLEOTIDE SEQUENCE [LARGE SCALE GENOMIC DNA]</scope>
    <source>
        <strain>ATCC 15356 / DSM 50701 / NCIMB 9529 / HD100</strain>
    </source>
</reference>
<name>NUOI_BDEBA</name>
<dbReference type="EC" id="7.1.1.-" evidence="1"/>
<dbReference type="EMBL" id="BX842654">
    <property type="protein sequence ID" value="CAE80844.1"/>
    <property type="molecule type" value="Genomic_DNA"/>
</dbReference>
<dbReference type="RefSeq" id="WP_011165448.1">
    <property type="nucleotide sequence ID" value="NC_005363.1"/>
</dbReference>
<dbReference type="SMR" id="Q6MIR9"/>
<dbReference type="STRING" id="264462.Bd3080"/>
<dbReference type="GeneID" id="93013935"/>
<dbReference type="KEGG" id="bba:Bd3080"/>
<dbReference type="eggNOG" id="COG1143">
    <property type="taxonomic scope" value="Bacteria"/>
</dbReference>
<dbReference type="HOGENOM" id="CLU_067218_4_3_7"/>
<dbReference type="Proteomes" id="UP000008080">
    <property type="component" value="Chromosome"/>
</dbReference>
<dbReference type="GO" id="GO:0005886">
    <property type="term" value="C:plasma membrane"/>
    <property type="evidence" value="ECO:0007669"/>
    <property type="project" value="UniProtKB-SubCell"/>
</dbReference>
<dbReference type="GO" id="GO:0051539">
    <property type="term" value="F:4 iron, 4 sulfur cluster binding"/>
    <property type="evidence" value="ECO:0007669"/>
    <property type="project" value="UniProtKB-KW"/>
</dbReference>
<dbReference type="GO" id="GO:0005506">
    <property type="term" value="F:iron ion binding"/>
    <property type="evidence" value="ECO:0007669"/>
    <property type="project" value="UniProtKB-UniRule"/>
</dbReference>
<dbReference type="GO" id="GO:0050136">
    <property type="term" value="F:NADH:ubiquinone reductase (non-electrogenic) activity"/>
    <property type="evidence" value="ECO:0007669"/>
    <property type="project" value="UniProtKB-UniRule"/>
</dbReference>
<dbReference type="GO" id="GO:0048038">
    <property type="term" value="F:quinone binding"/>
    <property type="evidence" value="ECO:0007669"/>
    <property type="project" value="UniProtKB-KW"/>
</dbReference>
<dbReference type="Gene3D" id="3.30.70.3270">
    <property type="match status" value="1"/>
</dbReference>
<dbReference type="HAMAP" id="MF_01351">
    <property type="entry name" value="NDH1_NuoI"/>
    <property type="match status" value="1"/>
</dbReference>
<dbReference type="InterPro" id="IPR017896">
    <property type="entry name" value="4Fe4S_Fe-S-bd"/>
</dbReference>
<dbReference type="InterPro" id="IPR017900">
    <property type="entry name" value="4Fe4S_Fe_S_CS"/>
</dbReference>
<dbReference type="InterPro" id="IPR010226">
    <property type="entry name" value="NADH_quinone_OxRdtase_chainI"/>
</dbReference>
<dbReference type="NCBIfam" id="TIGR01971">
    <property type="entry name" value="NuoI"/>
    <property type="match status" value="1"/>
</dbReference>
<dbReference type="PANTHER" id="PTHR10849">
    <property type="entry name" value="NADH DEHYDROGENASE UBIQUINONE IRON-SULFUR PROTEIN 8, MITOCHONDRIAL"/>
    <property type="match status" value="1"/>
</dbReference>
<dbReference type="Pfam" id="PF12838">
    <property type="entry name" value="Fer4_7"/>
    <property type="match status" value="1"/>
</dbReference>
<dbReference type="SUPFAM" id="SSF54862">
    <property type="entry name" value="4Fe-4S ferredoxins"/>
    <property type="match status" value="1"/>
</dbReference>
<dbReference type="PROSITE" id="PS00198">
    <property type="entry name" value="4FE4S_FER_1"/>
    <property type="match status" value="2"/>
</dbReference>
<dbReference type="PROSITE" id="PS51379">
    <property type="entry name" value="4FE4S_FER_2"/>
    <property type="match status" value="2"/>
</dbReference>
<protein>
    <recommendedName>
        <fullName evidence="1">NADH-quinone oxidoreductase subunit I</fullName>
        <ecNumber evidence="1">7.1.1.-</ecNumber>
    </recommendedName>
    <alternativeName>
        <fullName evidence="1">NADH dehydrogenase I subunit I</fullName>
    </alternativeName>
    <alternativeName>
        <fullName evidence="1">NDH-1 subunit I</fullName>
    </alternativeName>
</protein>